<name>Y9K0_BPP22</name>
<organism>
    <name type="scientific">Salmonella phage P22</name>
    <name type="common">Bacteriophage P22</name>
    <dbReference type="NCBI Taxonomy" id="10754"/>
    <lineage>
        <taxon>Viruses</taxon>
        <taxon>Duplodnaviria</taxon>
        <taxon>Heunggongvirae</taxon>
        <taxon>Uroviricota</taxon>
        <taxon>Caudoviricetes</taxon>
        <taxon>Lederbergvirus</taxon>
    </lineage>
</organism>
<protein>
    <recommendedName>
        <fullName>Uncharacterized 9.0 kDa protein in gp15-gp3 intergenic region</fullName>
    </recommendedName>
    <alternativeName>
        <fullName>ORF80</fullName>
    </alternativeName>
</protein>
<sequence>MAEIIPMTEEQKFQLEIYKLVMNQNAAAEEAFQFIGTDELKLELFKIHFQSGGANSDITTRTIEAVRKSREALDLFTTGA</sequence>
<proteinExistence type="predicted"/>
<reference key="1">
    <citation type="journal article" date="2000" name="J. Bacteriol.">
        <title>Sequence of the genome of Salmonella bacteriophage P22.</title>
        <authorList>
            <person name="Vander Byl C.S."/>
            <person name="Kropinski A.M.B."/>
        </authorList>
    </citation>
    <scope>NUCLEOTIDE SEQUENCE [LARGE SCALE GENOMIC DNA]</scope>
</reference>
<reference key="2">
    <citation type="journal article" date="2003" name="J. Bacteriol.">
        <title>Corrected sequence of the bacteriophage P22 genome.</title>
        <authorList>
            <person name="Pedulla M.L."/>
            <person name="Ford M.E."/>
            <person name="Karthikeyan T."/>
            <person name="Houtz J.M."/>
            <person name="Hendrix R.W."/>
            <person name="Hatfull G.F."/>
            <person name="Poteete A.R."/>
            <person name="Gilcrease E.B."/>
            <person name="Winn-Stapley D.A."/>
            <person name="Casjens S.R."/>
        </authorList>
    </citation>
    <scope>NUCLEOTIDE SEQUENCE [LARGE SCALE GENOMIC DNA]</scope>
</reference>
<dbReference type="EMBL" id="AF217253">
    <property type="protein sequence ID" value="AAF75061.1"/>
    <property type="molecule type" value="Genomic_DNA"/>
</dbReference>
<dbReference type="EMBL" id="BK000583">
    <property type="protein sequence ID" value="DAA01044.1"/>
    <property type="molecule type" value="Genomic_DNA"/>
</dbReference>
<dbReference type="RefSeq" id="NP_059625.1">
    <property type="nucleotide sequence ID" value="NC_002371.2"/>
</dbReference>
<dbReference type="GeneID" id="1262844"/>
<dbReference type="KEGG" id="vg:1262844"/>
<dbReference type="OrthoDB" id="20758at10239"/>
<dbReference type="Proteomes" id="UP000001795">
    <property type="component" value="Segment"/>
</dbReference>
<dbReference type="Proteomes" id="UP000007960">
    <property type="component" value="Segment"/>
</dbReference>
<dbReference type="InterPro" id="IPR022544">
    <property type="entry name" value="Phage_P22_Orf80"/>
</dbReference>
<dbReference type="Pfam" id="PF10834">
    <property type="entry name" value="DUF2560"/>
    <property type="match status" value="1"/>
</dbReference>
<accession>P57018</accession>
<accession>Q7PCD1</accession>
<organismHost>
    <name type="scientific">Salmonella typhimurium</name>
    <dbReference type="NCBI Taxonomy" id="90371"/>
</organismHost>
<keyword id="KW-1185">Reference proteome</keyword>
<feature type="chain" id="PRO_0000077782" description="Uncharacterized 9.0 kDa protein in gp15-gp3 intergenic region">
    <location>
        <begin position="1"/>
        <end position="80"/>
    </location>
</feature>